<gene>
    <name evidence="1" type="primary">ccmE</name>
    <name evidence="1" type="synonym">cycJ</name>
    <name type="ordered locus">PFL_1684</name>
</gene>
<accession>Q4KG23</accession>
<sequence length="151" mass="16083">MNPLRKKRLLIILAILVGVGIAVGLALSALKENINLFYTPTQIANGEAPLDTRIRAGGMVQAGSLQRSADSLDVKFVVTDFNKSVTITYRGILPDLFREGQGIVALGKLNADGVVVADEVLAKHDEKYMPPEVTKALKDSGQSAPTPAKEG</sequence>
<dbReference type="EMBL" id="CP000076">
    <property type="protein sequence ID" value="AAY90979.1"/>
    <property type="molecule type" value="Genomic_DNA"/>
</dbReference>
<dbReference type="RefSeq" id="WP_011060019.1">
    <property type="nucleotide sequence ID" value="NC_004129.6"/>
</dbReference>
<dbReference type="SMR" id="Q4KG23"/>
<dbReference type="STRING" id="220664.PFL_1684"/>
<dbReference type="GeneID" id="57474704"/>
<dbReference type="KEGG" id="pfl:PFL_1684"/>
<dbReference type="PATRIC" id="fig|220664.5.peg.1723"/>
<dbReference type="eggNOG" id="COG2332">
    <property type="taxonomic scope" value="Bacteria"/>
</dbReference>
<dbReference type="HOGENOM" id="CLU_079503_1_1_6"/>
<dbReference type="Proteomes" id="UP000008540">
    <property type="component" value="Chromosome"/>
</dbReference>
<dbReference type="GO" id="GO:0005886">
    <property type="term" value="C:plasma membrane"/>
    <property type="evidence" value="ECO:0007669"/>
    <property type="project" value="UniProtKB-SubCell"/>
</dbReference>
<dbReference type="GO" id="GO:0020037">
    <property type="term" value="F:heme binding"/>
    <property type="evidence" value="ECO:0007669"/>
    <property type="project" value="InterPro"/>
</dbReference>
<dbReference type="GO" id="GO:0046872">
    <property type="term" value="F:metal ion binding"/>
    <property type="evidence" value="ECO:0007669"/>
    <property type="project" value="UniProtKB-KW"/>
</dbReference>
<dbReference type="GO" id="GO:0017004">
    <property type="term" value="P:cytochrome complex assembly"/>
    <property type="evidence" value="ECO:0007669"/>
    <property type="project" value="UniProtKB-KW"/>
</dbReference>
<dbReference type="FunFam" id="2.40.50.140:FF:000104">
    <property type="entry name" value="Cytochrome c-type biogenesis protein CcmE"/>
    <property type="match status" value="1"/>
</dbReference>
<dbReference type="Gene3D" id="2.40.50.140">
    <property type="entry name" value="Nucleic acid-binding proteins"/>
    <property type="match status" value="1"/>
</dbReference>
<dbReference type="HAMAP" id="MF_01959">
    <property type="entry name" value="CcmE"/>
    <property type="match status" value="1"/>
</dbReference>
<dbReference type="InterPro" id="IPR004329">
    <property type="entry name" value="CcmE"/>
</dbReference>
<dbReference type="InterPro" id="IPR036127">
    <property type="entry name" value="CcmE-like_sf"/>
</dbReference>
<dbReference type="InterPro" id="IPR012340">
    <property type="entry name" value="NA-bd_OB-fold"/>
</dbReference>
<dbReference type="NCBIfam" id="NF009727">
    <property type="entry name" value="PRK13254.1-1"/>
    <property type="match status" value="1"/>
</dbReference>
<dbReference type="NCBIfam" id="NF009729">
    <property type="entry name" value="PRK13254.1-3"/>
    <property type="match status" value="1"/>
</dbReference>
<dbReference type="NCBIfam" id="NF009731">
    <property type="entry name" value="PRK13254.1-5"/>
    <property type="match status" value="1"/>
</dbReference>
<dbReference type="PANTHER" id="PTHR34128">
    <property type="entry name" value="CYTOCHROME C-TYPE BIOGENESIS PROTEIN CCME HOMOLOG, MITOCHONDRIAL"/>
    <property type="match status" value="1"/>
</dbReference>
<dbReference type="PANTHER" id="PTHR34128:SF2">
    <property type="entry name" value="CYTOCHROME C-TYPE BIOGENESIS PROTEIN CCME HOMOLOG, MITOCHONDRIAL"/>
    <property type="match status" value="1"/>
</dbReference>
<dbReference type="Pfam" id="PF03100">
    <property type="entry name" value="CcmE"/>
    <property type="match status" value="1"/>
</dbReference>
<dbReference type="SUPFAM" id="SSF82093">
    <property type="entry name" value="Heme chaperone CcmE"/>
    <property type="match status" value="1"/>
</dbReference>
<organism>
    <name type="scientific">Pseudomonas fluorescens (strain ATCC BAA-477 / NRRL B-23932 / Pf-5)</name>
    <dbReference type="NCBI Taxonomy" id="220664"/>
    <lineage>
        <taxon>Bacteria</taxon>
        <taxon>Pseudomonadati</taxon>
        <taxon>Pseudomonadota</taxon>
        <taxon>Gammaproteobacteria</taxon>
        <taxon>Pseudomonadales</taxon>
        <taxon>Pseudomonadaceae</taxon>
        <taxon>Pseudomonas</taxon>
    </lineage>
</organism>
<reference key="1">
    <citation type="journal article" date="2005" name="Nat. Biotechnol.">
        <title>Complete genome sequence of the plant commensal Pseudomonas fluorescens Pf-5.</title>
        <authorList>
            <person name="Paulsen I.T."/>
            <person name="Press C.M."/>
            <person name="Ravel J."/>
            <person name="Kobayashi D.Y."/>
            <person name="Myers G.S.A."/>
            <person name="Mavrodi D.V."/>
            <person name="DeBoy R.T."/>
            <person name="Seshadri R."/>
            <person name="Ren Q."/>
            <person name="Madupu R."/>
            <person name="Dodson R.J."/>
            <person name="Durkin A.S."/>
            <person name="Brinkac L.M."/>
            <person name="Daugherty S.C."/>
            <person name="Sullivan S.A."/>
            <person name="Rosovitz M.J."/>
            <person name="Gwinn M.L."/>
            <person name="Zhou L."/>
            <person name="Schneider D.J."/>
            <person name="Cartinhour S.W."/>
            <person name="Nelson W.C."/>
            <person name="Weidman J."/>
            <person name="Watkins K."/>
            <person name="Tran K."/>
            <person name="Khouri H."/>
            <person name="Pierson E.A."/>
            <person name="Pierson L.S. III"/>
            <person name="Thomashow L.S."/>
            <person name="Loper J.E."/>
        </authorList>
    </citation>
    <scope>NUCLEOTIDE SEQUENCE [LARGE SCALE GENOMIC DNA]</scope>
    <source>
        <strain>ATCC BAA-477 / NRRL B-23932 / Pf-5</strain>
    </source>
</reference>
<comment type="function">
    <text evidence="1">Heme chaperone required for the biogenesis of c-type cytochromes. Transiently binds heme delivered by CcmC and transfers the heme to apo-cytochromes in a process facilitated by CcmF and CcmH.</text>
</comment>
<comment type="subcellular location">
    <subcellularLocation>
        <location evidence="1">Cell inner membrane</location>
        <topology evidence="1">Single-pass type II membrane protein</topology>
        <orientation evidence="1">Periplasmic side</orientation>
    </subcellularLocation>
</comment>
<comment type="similarity">
    <text evidence="1">Belongs to the CcmE/CycJ family.</text>
</comment>
<protein>
    <recommendedName>
        <fullName evidence="1">Cytochrome c-type biogenesis protein CcmE</fullName>
    </recommendedName>
    <alternativeName>
        <fullName evidence="1">Cytochrome c maturation protein E</fullName>
    </alternativeName>
    <alternativeName>
        <fullName evidence="1">Heme chaperone CcmE</fullName>
    </alternativeName>
</protein>
<name>CCME_PSEF5</name>
<evidence type="ECO:0000255" key="1">
    <source>
        <dbReference type="HAMAP-Rule" id="MF_01959"/>
    </source>
</evidence>
<evidence type="ECO:0000256" key="2">
    <source>
        <dbReference type="SAM" id="MobiDB-lite"/>
    </source>
</evidence>
<keyword id="KW-0997">Cell inner membrane</keyword>
<keyword id="KW-1003">Cell membrane</keyword>
<keyword id="KW-0201">Cytochrome c-type biogenesis</keyword>
<keyword id="KW-0349">Heme</keyword>
<keyword id="KW-0408">Iron</keyword>
<keyword id="KW-0472">Membrane</keyword>
<keyword id="KW-0479">Metal-binding</keyword>
<keyword id="KW-0735">Signal-anchor</keyword>
<keyword id="KW-0812">Transmembrane</keyword>
<keyword id="KW-1133">Transmembrane helix</keyword>
<feature type="chain" id="PRO_0000238836" description="Cytochrome c-type biogenesis protein CcmE">
    <location>
        <begin position="1"/>
        <end position="151"/>
    </location>
</feature>
<feature type="topological domain" description="Cytoplasmic" evidence="1">
    <location>
        <begin position="1"/>
        <end position="8"/>
    </location>
</feature>
<feature type="transmembrane region" description="Helical; Signal-anchor for type II membrane protein" evidence="1">
    <location>
        <begin position="9"/>
        <end position="29"/>
    </location>
</feature>
<feature type="topological domain" description="Periplasmic" evidence="1">
    <location>
        <begin position="30"/>
        <end position="151"/>
    </location>
</feature>
<feature type="region of interest" description="Disordered" evidence="2">
    <location>
        <begin position="131"/>
        <end position="151"/>
    </location>
</feature>
<feature type="binding site" description="covalent" evidence="1">
    <location>
        <position position="124"/>
    </location>
    <ligand>
        <name>heme</name>
        <dbReference type="ChEBI" id="CHEBI:30413"/>
    </ligand>
</feature>
<feature type="binding site" description="axial binding residue" evidence="1">
    <location>
        <position position="128"/>
    </location>
    <ligand>
        <name>heme</name>
        <dbReference type="ChEBI" id="CHEBI:30413"/>
    </ligand>
    <ligandPart>
        <name>Fe</name>
        <dbReference type="ChEBI" id="CHEBI:18248"/>
    </ligandPart>
</feature>
<proteinExistence type="inferred from homology"/>